<reference key="1">
    <citation type="journal article" date="2002" name="J. Biol. Chem.">
        <title>Identification and characterization of Gemin7, a novel component of the survival of motor neuron complex.</title>
        <authorList>
            <person name="Baccon J."/>
            <person name="Pellizzoni L."/>
            <person name="Rappsilber J."/>
            <person name="Mann M."/>
            <person name="Dreyfuss G."/>
        </authorList>
    </citation>
    <scope>NUCLEOTIDE SEQUENCE [MRNA]</scope>
    <scope>PROTEIN SEQUENCE OF 30-57</scope>
    <scope>FUNCTION</scope>
    <scope>INTERACTION WITH SMN1; GEMIN6; SNRPB; SNRPD2; SNRPD3 AND SNRPE</scope>
    <scope>SUBCELLULAR LOCATION</scope>
</reference>
<reference key="2">
    <citation type="journal article" date="2004" name="Nat. Genet.">
        <title>Complete sequencing and characterization of 21,243 full-length human cDNAs.</title>
        <authorList>
            <person name="Ota T."/>
            <person name="Suzuki Y."/>
            <person name="Nishikawa T."/>
            <person name="Otsuki T."/>
            <person name="Sugiyama T."/>
            <person name="Irie R."/>
            <person name="Wakamatsu A."/>
            <person name="Hayashi K."/>
            <person name="Sato H."/>
            <person name="Nagai K."/>
            <person name="Kimura K."/>
            <person name="Makita H."/>
            <person name="Sekine M."/>
            <person name="Obayashi M."/>
            <person name="Nishi T."/>
            <person name="Shibahara T."/>
            <person name="Tanaka T."/>
            <person name="Ishii S."/>
            <person name="Yamamoto J."/>
            <person name="Saito K."/>
            <person name="Kawai Y."/>
            <person name="Isono Y."/>
            <person name="Nakamura Y."/>
            <person name="Nagahari K."/>
            <person name="Murakami K."/>
            <person name="Yasuda T."/>
            <person name="Iwayanagi T."/>
            <person name="Wagatsuma M."/>
            <person name="Shiratori A."/>
            <person name="Sudo H."/>
            <person name="Hosoiri T."/>
            <person name="Kaku Y."/>
            <person name="Kodaira H."/>
            <person name="Kondo H."/>
            <person name="Sugawara M."/>
            <person name="Takahashi M."/>
            <person name="Kanda K."/>
            <person name="Yokoi T."/>
            <person name="Furuya T."/>
            <person name="Kikkawa E."/>
            <person name="Omura Y."/>
            <person name="Abe K."/>
            <person name="Kamihara K."/>
            <person name="Katsuta N."/>
            <person name="Sato K."/>
            <person name="Tanikawa M."/>
            <person name="Yamazaki M."/>
            <person name="Ninomiya K."/>
            <person name="Ishibashi T."/>
            <person name="Yamashita H."/>
            <person name="Murakawa K."/>
            <person name="Fujimori K."/>
            <person name="Tanai H."/>
            <person name="Kimata M."/>
            <person name="Watanabe M."/>
            <person name="Hiraoka S."/>
            <person name="Chiba Y."/>
            <person name="Ishida S."/>
            <person name="Ono Y."/>
            <person name="Takiguchi S."/>
            <person name="Watanabe S."/>
            <person name="Yosida M."/>
            <person name="Hotuta T."/>
            <person name="Kusano J."/>
            <person name="Kanehori K."/>
            <person name="Takahashi-Fujii A."/>
            <person name="Hara H."/>
            <person name="Tanase T.-O."/>
            <person name="Nomura Y."/>
            <person name="Togiya S."/>
            <person name="Komai F."/>
            <person name="Hara R."/>
            <person name="Takeuchi K."/>
            <person name="Arita M."/>
            <person name="Imose N."/>
            <person name="Musashino K."/>
            <person name="Yuuki H."/>
            <person name="Oshima A."/>
            <person name="Sasaki N."/>
            <person name="Aotsuka S."/>
            <person name="Yoshikawa Y."/>
            <person name="Matsunawa H."/>
            <person name="Ichihara T."/>
            <person name="Shiohata N."/>
            <person name="Sano S."/>
            <person name="Moriya S."/>
            <person name="Momiyama H."/>
            <person name="Satoh N."/>
            <person name="Takami S."/>
            <person name="Terashima Y."/>
            <person name="Suzuki O."/>
            <person name="Nakagawa S."/>
            <person name="Senoh A."/>
            <person name="Mizoguchi H."/>
            <person name="Goto Y."/>
            <person name="Shimizu F."/>
            <person name="Wakebe H."/>
            <person name="Hishigaki H."/>
            <person name="Watanabe T."/>
            <person name="Sugiyama A."/>
            <person name="Takemoto M."/>
            <person name="Kawakami B."/>
            <person name="Yamazaki M."/>
            <person name="Watanabe K."/>
            <person name="Kumagai A."/>
            <person name="Itakura S."/>
            <person name="Fukuzumi Y."/>
            <person name="Fujimori Y."/>
            <person name="Komiyama M."/>
            <person name="Tashiro H."/>
            <person name="Tanigami A."/>
            <person name="Fujiwara T."/>
            <person name="Ono T."/>
            <person name="Yamada K."/>
            <person name="Fujii Y."/>
            <person name="Ozaki K."/>
            <person name="Hirao M."/>
            <person name="Ohmori Y."/>
            <person name="Kawabata A."/>
            <person name="Hikiji T."/>
            <person name="Kobatake N."/>
            <person name="Inagaki H."/>
            <person name="Ikema Y."/>
            <person name="Okamoto S."/>
            <person name="Okitani R."/>
            <person name="Kawakami T."/>
            <person name="Noguchi S."/>
            <person name="Itoh T."/>
            <person name="Shigeta K."/>
            <person name="Senba T."/>
            <person name="Matsumura K."/>
            <person name="Nakajima Y."/>
            <person name="Mizuno T."/>
            <person name="Morinaga M."/>
            <person name="Sasaki M."/>
            <person name="Togashi T."/>
            <person name="Oyama M."/>
            <person name="Hata H."/>
            <person name="Watanabe M."/>
            <person name="Komatsu T."/>
            <person name="Mizushima-Sugano J."/>
            <person name="Satoh T."/>
            <person name="Shirai Y."/>
            <person name="Takahashi Y."/>
            <person name="Nakagawa K."/>
            <person name="Okumura K."/>
            <person name="Nagase T."/>
            <person name="Nomura N."/>
            <person name="Kikuchi H."/>
            <person name="Masuho Y."/>
            <person name="Yamashita R."/>
            <person name="Nakai K."/>
            <person name="Yada T."/>
            <person name="Nakamura Y."/>
            <person name="Ohara O."/>
            <person name="Isogai T."/>
            <person name="Sugano S."/>
        </authorList>
    </citation>
    <scope>NUCLEOTIDE SEQUENCE [LARGE SCALE MRNA]</scope>
    <source>
        <tissue>Retinoblastoma</tissue>
    </source>
</reference>
<reference key="3">
    <citation type="submission" date="2004-06" db="EMBL/GenBank/DDBJ databases">
        <title>Cloning of human full open reading frames in Gateway(TM) system entry vector (pDONR201).</title>
        <authorList>
            <person name="Ebert L."/>
            <person name="Schick M."/>
            <person name="Neubert P."/>
            <person name="Schatten R."/>
            <person name="Henze S."/>
            <person name="Korn B."/>
        </authorList>
    </citation>
    <scope>NUCLEOTIDE SEQUENCE [LARGE SCALE MRNA]</scope>
</reference>
<reference key="4">
    <citation type="submission" date="2005-07" db="EMBL/GenBank/DDBJ databases">
        <authorList>
            <person name="Mural R.J."/>
            <person name="Istrail S."/>
            <person name="Sutton G.G."/>
            <person name="Florea L."/>
            <person name="Halpern A.L."/>
            <person name="Mobarry C.M."/>
            <person name="Lippert R."/>
            <person name="Walenz B."/>
            <person name="Shatkay H."/>
            <person name="Dew I."/>
            <person name="Miller J.R."/>
            <person name="Flanigan M.J."/>
            <person name="Edwards N.J."/>
            <person name="Bolanos R."/>
            <person name="Fasulo D."/>
            <person name="Halldorsson B.V."/>
            <person name="Hannenhalli S."/>
            <person name="Turner R."/>
            <person name="Yooseph S."/>
            <person name="Lu F."/>
            <person name="Nusskern D.R."/>
            <person name="Shue B.C."/>
            <person name="Zheng X.H."/>
            <person name="Zhong F."/>
            <person name="Delcher A.L."/>
            <person name="Huson D.H."/>
            <person name="Kravitz S.A."/>
            <person name="Mouchard L."/>
            <person name="Reinert K."/>
            <person name="Remington K.A."/>
            <person name="Clark A.G."/>
            <person name="Waterman M.S."/>
            <person name="Eichler E.E."/>
            <person name="Adams M.D."/>
            <person name="Hunkapiller M.W."/>
            <person name="Myers E.W."/>
            <person name="Venter J.C."/>
        </authorList>
    </citation>
    <scope>NUCLEOTIDE SEQUENCE [LARGE SCALE GENOMIC DNA]</scope>
</reference>
<reference key="5">
    <citation type="journal article" date="2004" name="Genome Res.">
        <title>The status, quality, and expansion of the NIH full-length cDNA project: the Mammalian Gene Collection (MGC).</title>
        <authorList>
            <consortium name="The MGC Project Team"/>
        </authorList>
    </citation>
    <scope>NUCLEOTIDE SEQUENCE [LARGE SCALE MRNA]</scope>
    <source>
        <tissue>Uterus</tissue>
    </source>
</reference>
<reference key="6">
    <citation type="journal article" date="2005" name="Mol. Cell. Biol.">
        <title>Specific sequence features, recognized by the SMN complex, identify snRNAs and determine their fate as snRNPs.</title>
        <authorList>
            <person name="Golembe T.J."/>
            <person name="Yong J."/>
            <person name="Dreyfuss G."/>
        </authorList>
    </citation>
    <scope>FUNCTION</scope>
    <scope>IDENTIFICATION IN THE SMN COMPLEX</scope>
    <scope>IDENTIFICATION IN SMN-SM COMPLEX</scope>
</reference>
<reference key="7">
    <citation type="journal article" date="2007" name="J. Biol. Chem.">
        <title>A comprehensive interaction map of the human survival of motor neuron (SMN) complex.</title>
        <authorList>
            <person name="Otter S."/>
            <person name="Grimmler M."/>
            <person name="Neuenkirchen N."/>
            <person name="Chari A."/>
            <person name="Sickmann A."/>
            <person name="Fischer U."/>
        </authorList>
    </citation>
    <scope>IDENTIFICATION IN THE SMN COMPLEX</scope>
    <scope>INTERACTION WITH GEMIN6 AND STRAP/UNRIP</scope>
</reference>
<reference key="8">
    <citation type="journal article" date="2008" name="Cell">
        <title>An assembly chaperone collaborates with the SMN complex to generate spliceosomal SnRNPs.</title>
        <authorList>
            <person name="Chari A."/>
            <person name="Golas M.M."/>
            <person name="Klingenhager M."/>
            <person name="Neuenkirchen N."/>
            <person name="Sander B."/>
            <person name="Englbrecht C."/>
            <person name="Sickmann A."/>
            <person name="Stark H."/>
            <person name="Fischer U."/>
        </authorList>
    </citation>
    <scope>FUNCTION IN SNRNP BIOGENESIS</scope>
    <scope>IDENTIFICATION IN SMN-SM COMPLEX</scope>
</reference>
<reference key="9">
    <citation type="journal article" date="2011" name="BMC Syst. Biol.">
        <title>Initial characterization of the human central proteome.</title>
        <authorList>
            <person name="Burkard T.R."/>
            <person name="Planyavsky M."/>
            <person name="Kaupe I."/>
            <person name="Breitwieser F.P."/>
            <person name="Buerckstuemmer T."/>
            <person name="Bennett K.L."/>
            <person name="Superti-Furga G."/>
            <person name="Colinge J."/>
        </authorList>
    </citation>
    <scope>IDENTIFICATION BY MASS SPECTROMETRY [LARGE SCALE ANALYSIS]</scope>
</reference>
<reference key="10">
    <citation type="journal article" date="2012" name="Mol. Cell. Proteomics">
        <title>Comparative large-scale characterisation of plant vs. mammal proteins reveals similar and idiosyncratic N-alpha acetylation features.</title>
        <authorList>
            <person name="Bienvenut W.V."/>
            <person name="Sumpton D."/>
            <person name="Martinez A."/>
            <person name="Lilla S."/>
            <person name="Espagne C."/>
            <person name="Meinnel T."/>
            <person name="Giglione C."/>
        </authorList>
    </citation>
    <scope>ACETYLATION [LARGE SCALE ANALYSIS] AT MET-1</scope>
    <scope>IDENTIFICATION BY MASS SPECTROMETRY [LARGE SCALE ANALYSIS]</scope>
</reference>
<reference key="11">
    <citation type="journal article" date="2012" name="Proc. Natl. Acad. Sci. U.S.A.">
        <title>N-terminal acetylome analyses and functional insights of the N-terminal acetyltransferase NatB.</title>
        <authorList>
            <person name="Van Damme P."/>
            <person name="Lasa M."/>
            <person name="Polevoda B."/>
            <person name="Gazquez C."/>
            <person name="Elosegui-Artola A."/>
            <person name="Kim D.S."/>
            <person name="De Juan-Pardo E."/>
            <person name="Demeyer K."/>
            <person name="Hole K."/>
            <person name="Larrea E."/>
            <person name="Timmerman E."/>
            <person name="Prieto J."/>
            <person name="Arnesen T."/>
            <person name="Sherman F."/>
            <person name="Gevaert K."/>
            <person name="Aldabe R."/>
        </authorList>
    </citation>
    <scope>ACETYLATION [LARGE SCALE ANALYSIS] AT MET-1</scope>
    <scope>IDENTIFICATION BY MASS SPECTROMETRY [LARGE SCALE ANALYSIS]</scope>
</reference>
<reference key="12">
    <citation type="journal article" date="2013" name="J. Proteome Res.">
        <title>Toward a comprehensive characterization of a human cancer cell phosphoproteome.</title>
        <authorList>
            <person name="Zhou H."/>
            <person name="Di Palma S."/>
            <person name="Preisinger C."/>
            <person name="Peng M."/>
            <person name="Polat A.N."/>
            <person name="Heck A.J."/>
            <person name="Mohammed S."/>
        </authorList>
    </citation>
    <scope>PHOSPHORYLATION [LARGE SCALE ANALYSIS] AT THR-3</scope>
    <scope>IDENTIFICATION BY MASS SPECTROMETRY [LARGE SCALE ANALYSIS]</scope>
    <source>
        <tissue>Cervix carcinoma</tissue>
        <tissue>Erythroleukemia</tissue>
    </source>
</reference>
<reference key="13">
    <citation type="journal article" date="2005" name="Structure">
        <title>The Gemin6-Gemin7 heterodimer from the survival of motor neurons complex has an Sm protein-like structure.</title>
        <authorList>
            <person name="Ma Y."/>
            <person name="Dostie J."/>
            <person name="Dreyfuss G."/>
            <person name="Van Duyne G.D."/>
        </authorList>
    </citation>
    <scope>X-RAY CRYSTALLOGRAPHY (2.0 ANGSTROMS) OF 47-131 IN COMPLEX WITH GEMIN6</scope>
    <scope>INTERACTION WITH SNRPB; SNRPD2; SNRPD3 AND SNRPE</scope>
</reference>
<reference evidence="10" key="14">
    <citation type="journal article" date="2021" name="Nucleic Acids Res.">
        <title>Identification and structural analysis of the Schizosaccharomyces pombe SMN complex.</title>
        <authorList>
            <person name="Veepaschit J."/>
            <person name="Viswanathan A."/>
            <person name="Bordonne R."/>
            <person name="Grimm C."/>
            <person name="Fischer U."/>
        </authorList>
    </citation>
    <scope>X-RAY CRYSTALLOGRAPHY (1.52 ANGSTROMS) OF 46-131</scope>
    <scope>INTERACTION WITH GEMIN6 AND GEMIN8</scope>
</reference>
<gene>
    <name type="primary">GEMIN7</name>
</gene>
<name>GEMI7_HUMAN</name>
<accession>Q9H840</accession>
<accession>Q6IA34</accession>
<comment type="function">
    <text evidence="3 7">The SMN complex catalyzes the assembly of small nuclear ribonucleoproteins (snRNPs), the building blocks of the spliceosome, and thereby plays an important role in the splicing of cellular pre-mRNAs. Most spliceosomal snRNPs contain a common set of Sm proteins SNRPB, SNRPD1, SNRPD2, SNRPD3, SNRPE, SNRPF and SNRPG that assemble in a heptameric protein ring on the Sm site of the small nuclear RNA to form the core snRNP (Sm core). In the cytosol, the Sm proteins SNRPD1, SNRPD2, SNRPE, SNRPF and SNRPG are trapped in an inactive 6S pICln-Sm complex by the chaperone CLNS1A that controls the assembly of the core snRNP. To assemble core snRNPs, the SMN complex accepts the trapped 5Sm proteins from CLNS1A forming an intermediate. Binding of snRNA inside 5Sm triggers eviction of the SMN complex, thereby allowing binding of SNRPD3 and SNRPB to complete assembly of the core snRNP.</text>
</comment>
<comment type="subunit">
    <text evidence="3 4 5 6 7 8">Part of the core SMN complex that contains SMN1, GEMIN2/SIP1, DDX20/GEMIN3, GEMIN4, GEMIN5, GEMIN6, GEMIN7, GEMIN8 and STRAP/UNRIP (PubMed:12065586, PubMed:15939020, PubMed:16314521, PubMed:17178713, PubMed:18984161). Part of the SMN-Sm complex that contains SMN1, GEMIN2/SIP1, DDX20/GEMIN3, GEMIN4, GEMIN5, GEMIN6, GEMIN7, GEMIN8, STRAP/UNRIP and the Sm proteins SNRPB, SNRPD1, SNRPD2, SNRPD3, SNRPE, SNRPF and SNRPG (PubMed:16314521, PubMed:18984161). Interacts with GEMIN6; the interaction is direct (PubMed:12065586, PubMed:15939020, PubMed:17178713, PubMed:33754639). Interacts with STRAP/UNRIP; the interaction is direct (PubMed:17178713). Interacts with GEMIN8; the interaction is direct (PubMed:33754639). Interacts with SNRPB, SNRPD2, SNRPD3 and SNRPE; the interaction is direct (PubMed:12065586, PubMed:15939020).</text>
</comment>
<comment type="interaction">
    <interactant intactId="EBI-715455">
        <id>Q9H840</id>
    </interactant>
    <interactant intactId="EBI-752301">
        <id>Q8WXD5</id>
        <label>GEMIN6</label>
    </interactant>
    <organismsDiffer>false</organismsDiffer>
    <experiments>23</experiments>
</comment>
<comment type="interaction">
    <interactant intactId="EBI-715455">
        <id>Q9H840</id>
    </interactant>
    <interactant intactId="EBI-727414">
        <id>Q9Y3F4</id>
        <label>STRAP</label>
    </interactant>
    <organismsDiffer>false</organismsDiffer>
    <experiments>7</experiments>
</comment>
<comment type="subcellular location">
    <subcellularLocation>
        <location evidence="3">Nucleus</location>
        <location evidence="3">Nucleoplasm</location>
    </subcellularLocation>
    <subcellularLocation>
        <location evidence="3">Nucleus</location>
        <location evidence="3">Gem</location>
    </subcellularLocation>
    <subcellularLocation>
        <location evidence="3">Cytoplasm</location>
    </subcellularLocation>
    <text>Found both in the nucleoplasm and in nuclear bodies called gems (Gemini of Cajal bodies) that are often in proximity to Cajal (coiled) bodies. Also found in the cytoplasm.</text>
</comment>
<comment type="similarity">
    <text evidence="9">Belongs to the gemin-7 family.</text>
</comment>
<proteinExistence type="evidence at protein level"/>
<sequence>MQTPVNIPVPVLRLPRGPDGFSRGFAPDGRRAPLRPEVPEIQECPIAQESLESQEQRARAALRERYLRSLLAMVGHQVSFTLHEGVRVAAHFGATDLDVANFYVSQLQTPIGVQAEALLRCSDIISYTFKP</sequence>
<dbReference type="EMBL" id="AY114106">
    <property type="protein sequence ID" value="AAM44083.1"/>
    <property type="molecule type" value="mRNA"/>
</dbReference>
<dbReference type="EMBL" id="AK024018">
    <property type="protein sequence ID" value="BAB14780.1"/>
    <property type="molecule type" value="mRNA"/>
</dbReference>
<dbReference type="EMBL" id="CR457321">
    <property type="protein sequence ID" value="CAG33602.1"/>
    <property type="molecule type" value="mRNA"/>
</dbReference>
<dbReference type="EMBL" id="CH471126">
    <property type="protein sequence ID" value="EAW57321.1"/>
    <property type="molecule type" value="Genomic_DNA"/>
</dbReference>
<dbReference type="EMBL" id="BC007793">
    <property type="protein sequence ID" value="AAH07793.1"/>
    <property type="molecule type" value="mRNA"/>
</dbReference>
<dbReference type="CCDS" id="CCDS12654.1"/>
<dbReference type="RefSeq" id="NP_001007270.1">
    <property type="nucleotide sequence ID" value="NM_001007269.2"/>
</dbReference>
<dbReference type="RefSeq" id="NP_001007271.1">
    <property type="nucleotide sequence ID" value="NM_001007270.2"/>
</dbReference>
<dbReference type="RefSeq" id="NP_001305983.1">
    <property type="nucleotide sequence ID" value="NM_001319054.1"/>
</dbReference>
<dbReference type="RefSeq" id="NP_001305984.1">
    <property type="nucleotide sequence ID" value="NM_001319055.2"/>
</dbReference>
<dbReference type="RefSeq" id="NP_078983.1">
    <property type="nucleotide sequence ID" value="NM_024707.3"/>
</dbReference>
<dbReference type="RefSeq" id="XP_005259319.1">
    <property type="nucleotide sequence ID" value="XM_005259262.3"/>
</dbReference>
<dbReference type="RefSeq" id="XP_005259320.1">
    <property type="nucleotide sequence ID" value="XM_005259263.6"/>
</dbReference>
<dbReference type="RefSeq" id="XP_016882801.1">
    <property type="nucleotide sequence ID" value="XM_017027312.1"/>
</dbReference>
<dbReference type="PDB" id="1Y96">
    <property type="method" value="X-ray"/>
    <property type="resolution" value="2.00 A"/>
    <property type="chains" value="B/D=47-131"/>
</dbReference>
<dbReference type="PDB" id="7BBL">
    <property type="method" value="X-ray"/>
    <property type="resolution" value="1.52 A"/>
    <property type="chains" value="B/D=46-131"/>
</dbReference>
<dbReference type="PDBsum" id="1Y96"/>
<dbReference type="PDBsum" id="7BBL"/>
<dbReference type="SMR" id="Q9H840"/>
<dbReference type="BioGRID" id="122869">
    <property type="interactions" value="72"/>
</dbReference>
<dbReference type="ComplexPortal" id="CPX-6031">
    <property type="entry name" value="Survival motor neuron complex"/>
</dbReference>
<dbReference type="CORUM" id="Q9H840"/>
<dbReference type="DIP" id="DIP-41750N"/>
<dbReference type="FunCoup" id="Q9H840">
    <property type="interactions" value="918"/>
</dbReference>
<dbReference type="IntAct" id="Q9H840">
    <property type="interactions" value="54"/>
</dbReference>
<dbReference type="MINT" id="Q9H840"/>
<dbReference type="STRING" id="9606.ENSP00000270257"/>
<dbReference type="ChEMBL" id="CHEMBL4105841"/>
<dbReference type="iPTMnet" id="Q9H840"/>
<dbReference type="PhosphoSitePlus" id="Q9H840"/>
<dbReference type="BioMuta" id="GEMIN7"/>
<dbReference type="DMDM" id="34922127"/>
<dbReference type="jPOST" id="Q9H840"/>
<dbReference type="MassIVE" id="Q9H840"/>
<dbReference type="PaxDb" id="9606-ENSP00000270257"/>
<dbReference type="PeptideAtlas" id="Q9H840"/>
<dbReference type="ProteomicsDB" id="81175"/>
<dbReference type="Pumba" id="Q9H840"/>
<dbReference type="Antibodypedia" id="31264">
    <property type="antibodies" value="155 antibodies from 22 providers"/>
</dbReference>
<dbReference type="DNASU" id="79760"/>
<dbReference type="Ensembl" id="ENST00000270257.9">
    <property type="protein sequence ID" value="ENSP00000270257.3"/>
    <property type="gene ID" value="ENSG00000142252.11"/>
</dbReference>
<dbReference type="Ensembl" id="ENST00000391951.2">
    <property type="protein sequence ID" value="ENSP00000375813.1"/>
    <property type="gene ID" value="ENSG00000142252.11"/>
</dbReference>
<dbReference type="Ensembl" id="ENST00000591607.1">
    <property type="protein sequence ID" value="ENSP00000466342.1"/>
    <property type="gene ID" value="ENSG00000142252.11"/>
</dbReference>
<dbReference type="Ensembl" id="ENST00000591747.5">
    <property type="protein sequence ID" value="ENSP00000465704.1"/>
    <property type="gene ID" value="ENSG00000142252.11"/>
</dbReference>
<dbReference type="GeneID" id="79760"/>
<dbReference type="KEGG" id="hsa:79760"/>
<dbReference type="MANE-Select" id="ENST00000270257.9">
    <property type="protein sequence ID" value="ENSP00000270257.3"/>
    <property type="RefSeq nucleotide sequence ID" value="NM_024707.3"/>
    <property type="RefSeq protein sequence ID" value="NP_078983.1"/>
</dbReference>
<dbReference type="UCSC" id="uc002pap.2">
    <property type="organism name" value="human"/>
</dbReference>
<dbReference type="AGR" id="HGNC:20045"/>
<dbReference type="CTD" id="79760"/>
<dbReference type="DisGeNET" id="79760"/>
<dbReference type="GeneCards" id="GEMIN7"/>
<dbReference type="HGNC" id="HGNC:20045">
    <property type="gene designation" value="GEMIN7"/>
</dbReference>
<dbReference type="HPA" id="ENSG00000142252">
    <property type="expression patterns" value="Low tissue specificity"/>
</dbReference>
<dbReference type="MIM" id="607419">
    <property type="type" value="gene"/>
</dbReference>
<dbReference type="neXtProt" id="NX_Q9H840"/>
<dbReference type="OpenTargets" id="ENSG00000142252"/>
<dbReference type="PharmGKB" id="PA134959810"/>
<dbReference type="VEuPathDB" id="HostDB:ENSG00000142252"/>
<dbReference type="eggNOG" id="ENOG502S59N">
    <property type="taxonomic scope" value="Eukaryota"/>
</dbReference>
<dbReference type="GeneTree" id="ENSGT00390000018039"/>
<dbReference type="HOGENOM" id="CLU_2031900_0_0_1"/>
<dbReference type="InParanoid" id="Q9H840"/>
<dbReference type="OMA" id="CADIISY"/>
<dbReference type="OrthoDB" id="70763at2759"/>
<dbReference type="PAN-GO" id="Q9H840">
    <property type="GO annotations" value="2 GO annotations based on evolutionary models"/>
</dbReference>
<dbReference type="PhylomeDB" id="Q9H840"/>
<dbReference type="PathwayCommons" id="Q9H840"/>
<dbReference type="Reactome" id="R-HSA-191859">
    <property type="pathway name" value="snRNP Assembly"/>
</dbReference>
<dbReference type="Reactome" id="R-HSA-9754678">
    <property type="pathway name" value="SARS-CoV-2 modulates host translation machinery"/>
</dbReference>
<dbReference type="SignaLink" id="Q9H840"/>
<dbReference type="SIGNOR" id="Q9H840"/>
<dbReference type="BioGRID-ORCS" id="79760">
    <property type="hits" value="586 hits in 1134 CRISPR screens"/>
</dbReference>
<dbReference type="CD-CODE" id="6F24707C">
    <property type="entry name" value="Cajal body"/>
</dbReference>
<dbReference type="CD-CODE" id="DEE660B4">
    <property type="entry name" value="Stress granule"/>
</dbReference>
<dbReference type="ChiTaRS" id="GEMIN7">
    <property type="organism name" value="human"/>
</dbReference>
<dbReference type="EvolutionaryTrace" id="Q9H840"/>
<dbReference type="GenomeRNAi" id="79760"/>
<dbReference type="Pharos" id="Q9H840">
    <property type="development level" value="Tbio"/>
</dbReference>
<dbReference type="PRO" id="PR:Q9H840"/>
<dbReference type="Proteomes" id="UP000005640">
    <property type="component" value="Chromosome 19"/>
</dbReference>
<dbReference type="RNAct" id="Q9H840">
    <property type="molecule type" value="protein"/>
</dbReference>
<dbReference type="Bgee" id="ENSG00000142252">
    <property type="expression patterns" value="Expressed in lower esophagus mucosa and 145 other cell types or tissues"/>
</dbReference>
<dbReference type="GO" id="GO:0005737">
    <property type="term" value="C:cytoplasm"/>
    <property type="evidence" value="ECO:0000314"/>
    <property type="project" value="UniProtKB"/>
</dbReference>
<dbReference type="GO" id="GO:0005829">
    <property type="term" value="C:cytosol"/>
    <property type="evidence" value="ECO:0000314"/>
    <property type="project" value="UniProtKB"/>
</dbReference>
<dbReference type="GO" id="GO:0097504">
    <property type="term" value="C:Gemini of Cajal bodies"/>
    <property type="evidence" value="ECO:0000314"/>
    <property type="project" value="UniProtKB"/>
</dbReference>
<dbReference type="GO" id="GO:0016604">
    <property type="term" value="C:nuclear body"/>
    <property type="evidence" value="ECO:0000314"/>
    <property type="project" value="UniProtKB"/>
</dbReference>
<dbReference type="GO" id="GO:0005654">
    <property type="term" value="C:nucleoplasm"/>
    <property type="evidence" value="ECO:0000314"/>
    <property type="project" value="UniProtKB"/>
</dbReference>
<dbReference type="GO" id="GO:0120114">
    <property type="term" value="C:Sm-like protein family complex"/>
    <property type="evidence" value="ECO:0000318"/>
    <property type="project" value="GO_Central"/>
</dbReference>
<dbReference type="GO" id="GO:0032797">
    <property type="term" value="C:SMN complex"/>
    <property type="evidence" value="ECO:0000314"/>
    <property type="project" value="UniProtKB"/>
</dbReference>
<dbReference type="GO" id="GO:0034719">
    <property type="term" value="C:SMN-Sm protein complex"/>
    <property type="evidence" value="ECO:0000314"/>
    <property type="project" value="UniProtKB"/>
</dbReference>
<dbReference type="GO" id="GO:0003723">
    <property type="term" value="F:RNA binding"/>
    <property type="evidence" value="ECO:0007669"/>
    <property type="project" value="InterPro"/>
</dbReference>
<dbReference type="GO" id="GO:0000398">
    <property type="term" value="P:mRNA splicing, via spliceosome"/>
    <property type="evidence" value="ECO:0000304"/>
    <property type="project" value="UniProtKB"/>
</dbReference>
<dbReference type="GO" id="GO:0000387">
    <property type="term" value="P:spliceosomal snRNP assembly"/>
    <property type="evidence" value="ECO:0000314"/>
    <property type="project" value="UniProtKB"/>
</dbReference>
<dbReference type="CDD" id="cd11677">
    <property type="entry name" value="Gemin7"/>
    <property type="match status" value="1"/>
</dbReference>
<dbReference type="FunFam" id="2.30.30.100:FF:000040">
    <property type="entry name" value="Gem-associated protein 7"/>
    <property type="match status" value="1"/>
</dbReference>
<dbReference type="Gene3D" id="2.30.30.100">
    <property type="match status" value="1"/>
</dbReference>
<dbReference type="InterPro" id="IPR047575">
    <property type="entry name" value="Sm"/>
</dbReference>
<dbReference type="InterPro" id="IPR020338">
    <property type="entry name" value="SMN_gemin7"/>
</dbReference>
<dbReference type="InterPro" id="IPR024642">
    <property type="entry name" value="SUZ-C"/>
</dbReference>
<dbReference type="PANTHER" id="PTHR14679">
    <property type="entry name" value="GEM-ASSOCIATED PROTEIN 7"/>
    <property type="match status" value="1"/>
</dbReference>
<dbReference type="PANTHER" id="PTHR14679:SF1">
    <property type="entry name" value="GEM-ASSOCIATED PROTEIN 7"/>
    <property type="match status" value="1"/>
</dbReference>
<dbReference type="Pfam" id="PF11095">
    <property type="entry name" value="Gemin7"/>
    <property type="match status" value="1"/>
</dbReference>
<dbReference type="PROSITE" id="PS52002">
    <property type="entry name" value="SM"/>
    <property type="match status" value="1"/>
</dbReference>
<dbReference type="PROSITE" id="PS51938">
    <property type="entry name" value="SUZ_C"/>
    <property type="match status" value="1"/>
</dbReference>
<protein>
    <recommendedName>
        <fullName>Gem-associated protein 7</fullName>
        <shortName>Gemin-7</shortName>
    </recommendedName>
    <alternativeName>
        <fullName>SIP3</fullName>
    </alternativeName>
</protein>
<organism>
    <name type="scientific">Homo sapiens</name>
    <name type="common">Human</name>
    <dbReference type="NCBI Taxonomy" id="9606"/>
    <lineage>
        <taxon>Eukaryota</taxon>
        <taxon>Metazoa</taxon>
        <taxon>Chordata</taxon>
        <taxon>Craniata</taxon>
        <taxon>Vertebrata</taxon>
        <taxon>Euteleostomi</taxon>
        <taxon>Mammalia</taxon>
        <taxon>Eutheria</taxon>
        <taxon>Euarchontoglires</taxon>
        <taxon>Primates</taxon>
        <taxon>Haplorrhini</taxon>
        <taxon>Catarrhini</taxon>
        <taxon>Hominidae</taxon>
        <taxon>Homo</taxon>
    </lineage>
</organism>
<feature type="chain" id="PRO_0000087462" description="Gem-associated protein 7">
    <location>
        <begin position="1"/>
        <end position="131"/>
    </location>
</feature>
<feature type="domain" description="SUZ-C" evidence="1">
    <location>
        <begin position="1"/>
        <end position="29"/>
    </location>
</feature>
<feature type="domain" description="Sm" evidence="2">
    <location>
        <begin position="65"/>
        <end position="131"/>
    </location>
</feature>
<feature type="modified residue" description="N-acetylmethionine" evidence="11 12">
    <location>
        <position position="1"/>
    </location>
</feature>
<feature type="modified residue" description="Phosphothreonine" evidence="13">
    <location>
        <position position="3"/>
    </location>
</feature>
<feature type="helix" evidence="14">
    <location>
        <begin position="51"/>
        <end position="71"/>
    </location>
</feature>
<feature type="turn" evidence="14">
    <location>
        <begin position="72"/>
        <end position="75"/>
    </location>
</feature>
<feature type="strand" evidence="14">
    <location>
        <begin position="76"/>
        <end position="82"/>
    </location>
</feature>
<feature type="helix" evidence="14">
    <location>
        <begin position="83"/>
        <end position="85"/>
    </location>
</feature>
<feature type="strand" evidence="14">
    <location>
        <begin position="87"/>
        <end position="95"/>
    </location>
</feature>
<feature type="strand" evidence="14">
    <location>
        <begin position="97"/>
        <end position="99"/>
    </location>
</feature>
<feature type="strand" evidence="14">
    <location>
        <begin position="102"/>
        <end position="109"/>
    </location>
</feature>
<feature type="strand" evidence="14">
    <location>
        <begin position="112"/>
        <end position="119"/>
    </location>
</feature>
<feature type="helix" evidence="14">
    <location>
        <begin position="121"/>
        <end position="123"/>
    </location>
</feature>
<feature type="strand" evidence="14">
    <location>
        <begin position="124"/>
        <end position="129"/>
    </location>
</feature>
<evidence type="ECO:0000255" key="1">
    <source>
        <dbReference type="PROSITE-ProRule" id="PRU01287"/>
    </source>
</evidence>
<evidence type="ECO:0000255" key="2">
    <source>
        <dbReference type="PROSITE-ProRule" id="PRU01346"/>
    </source>
</evidence>
<evidence type="ECO:0000269" key="3">
    <source>
    </source>
</evidence>
<evidence type="ECO:0000269" key="4">
    <source>
    </source>
</evidence>
<evidence type="ECO:0000269" key="5">
    <source>
    </source>
</evidence>
<evidence type="ECO:0000269" key="6">
    <source>
    </source>
</evidence>
<evidence type="ECO:0000269" key="7">
    <source>
    </source>
</evidence>
<evidence type="ECO:0000269" key="8">
    <source>
    </source>
</evidence>
<evidence type="ECO:0000305" key="9"/>
<evidence type="ECO:0007744" key="10">
    <source>
        <dbReference type="PDB" id="7BBL"/>
    </source>
</evidence>
<evidence type="ECO:0007744" key="11">
    <source>
    </source>
</evidence>
<evidence type="ECO:0007744" key="12">
    <source>
    </source>
</evidence>
<evidence type="ECO:0007744" key="13">
    <source>
    </source>
</evidence>
<evidence type="ECO:0007829" key="14">
    <source>
        <dbReference type="PDB" id="7BBL"/>
    </source>
</evidence>
<keyword id="KW-0002">3D-structure</keyword>
<keyword id="KW-0007">Acetylation</keyword>
<keyword id="KW-0963">Cytoplasm</keyword>
<keyword id="KW-0903">Direct protein sequencing</keyword>
<keyword id="KW-0507">mRNA processing</keyword>
<keyword id="KW-0508">mRNA splicing</keyword>
<keyword id="KW-0539">Nucleus</keyword>
<keyword id="KW-0597">Phosphoprotein</keyword>
<keyword id="KW-1267">Proteomics identification</keyword>
<keyword id="KW-1185">Reference proteome</keyword>